<organism>
    <name type="scientific">Methanocaldococcus jannaschii (strain ATCC 43067 / DSM 2661 / JAL-1 / JCM 10045 / NBRC 100440)</name>
    <name type="common">Methanococcus jannaschii</name>
    <dbReference type="NCBI Taxonomy" id="243232"/>
    <lineage>
        <taxon>Archaea</taxon>
        <taxon>Methanobacteriati</taxon>
        <taxon>Methanobacteriota</taxon>
        <taxon>Methanomada group</taxon>
        <taxon>Methanococci</taxon>
        <taxon>Methanococcales</taxon>
        <taxon>Methanocaldococcaceae</taxon>
        <taxon>Methanocaldococcus</taxon>
    </lineage>
</organism>
<dbReference type="EC" id="4.2.3.1"/>
<dbReference type="EMBL" id="L77117">
    <property type="protein sequence ID" value="AAB99473.1"/>
    <property type="molecule type" value="Genomic_DNA"/>
</dbReference>
<dbReference type="PIR" id="H64482">
    <property type="entry name" value="H64482"/>
</dbReference>
<dbReference type="RefSeq" id="WP_010870985.1">
    <property type="nucleotide sequence ID" value="NC_000909.1"/>
</dbReference>
<dbReference type="SMR" id="Q58860"/>
<dbReference type="FunCoup" id="Q58860">
    <property type="interactions" value="123"/>
</dbReference>
<dbReference type="STRING" id="243232.MJ_1465"/>
<dbReference type="PaxDb" id="243232-MJ_1465"/>
<dbReference type="EnsemblBacteria" id="AAB99473">
    <property type="protein sequence ID" value="AAB99473"/>
    <property type="gene ID" value="MJ_1465"/>
</dbReference>
<dbReference type="GeneID" id="1452369"/>
<dbReference type="KEGG" id="mja:MJ_1465"/>
<dbReference type="eggNOG" id="arCOG01434">
    <property type="taxonomic scope" value="Archaea"/>
</dbReference>
<dbReference type="HOGENOM" id="CLU_028142_4_1_2"/>
<dbReference type="InParanoid" id="Q58860"/>
<dbReference type="OrthoDB" id="6371at2157"/>
<dbReference type="PhylomeDB" id="Q58860"/>
<dbReference type="BioCyc" id="MetaCyc:MONOMER-14634"/>
<dbReference type="UniPathway" id="UPA00050">
    <property type="reaction ID" value="UER00065"/>
</dbReference>
<dbReference type="Proteomes" id="UP000000805">
    <property type="component" value="Chromosome"/>
</dbReference>
<dbReference type="GO" id="GO:0005737">
    <property type="term" value="C:cytoplasm"/>
    <property type="evidence" value="ECO:0000318"/>
    <property type="project" value="GO_Central"/>
</dbReference>
<dbReference type="GO" id="GO:0030170">
    <property type="term" value="F:pyridoxal phosphate binding"/>
    <property type="evidence" value="ECO:0007669"/>
    <property type="project" value="InterPro"/>
</dbReference>
<dbReference type="GO" id="GO:0004795">
    <property type="term" value="F:threonine synthase activity"/>
    <property type="evidence" value="ECO:0000318"/>
    <property type="project" value="GO_Central"/>
</dbReference>
<dbReference type="GO" id="GO:0019344">
    <property type="term" value="P:cysteine biosynthetic process"/>
    <property type="evidence" value="ECO:0000318"/>
    <property type="project" value="GO_Central"/>
</dbReference>
<dbReference type="GO" id="GO:0009088">
    <property type="term" value="P:threonine biosynthetic process"/>
    <property type="evidence" value="ECO:0007669"/>
    <property type="project" value="UniProtKB-UniPathway"/>
</dbReference>
<dbReference type="CDD" id="cd01563">
    <property type="entry name" value="Thr-synth_1"/>
    <property type="match status" value="1"/>
</dbReference>
<dbReference type="FunFam" id="3.40.50.1100:FF:000013">
    <property type="entry name" value="Threonine synthase"/>
    <property type="match status" value="1"/>
</dbReference>
<dbReference type="FunFam" id="3.40.50.1100:FF:000014">
    <property type="entry name" value="Threonine synthase"/>
    <property type="match status" value="1"/>
</dbReference>
<dbReference type="Gene3D" id="3.40.50.1100">
    <property type="match status" value="2"/>
</dbReference>
<dbReference type="InterPro" id="IPR050147">
    <property type="entry name" value="Ser/Thr_Dehydratase"/>
</dbReference>
<dbReference type="InterPro" id="IPR000634">
    <property type="entry name" value="Ser/Thr_deHydtase_PyrdxlP-BS"/>
</dbReference>
<dbReference type="InterPro" id="IPR004450">
    <property type="entry name" value="Thr_synthase-like"/>
</dbReference>
<dbReference type="InterPro" id="IPR026260">
    <property type="entry name" value="Thr_Synthase_bac/arc"/>
</dbReference>
<dbReference type="InterPro" id="IPR001926">
    <property type="entry name" value="TrpB-like_PALP"/>
</dbReference>
<dbReference type="InterPro" id="IPR036052">
    <property type="entry name" value="TrpB-like_PALP_sf"/>
</dbReference>
<dbReference type="NCBIfam" id="NF006050">
    <property type="entry name" value="PRK08197.1"/>
    <property type="match status" value="1"/>
</dbReference>
<dbReference type="NCBIfam" id="TIGR00260">
    <property type="entry name" value="thrC"/>
    <property type="match status" value="1"/>
</dbReference>
<dbReference type="PANTHER" id="PTHR48078:SF6">
    <property type="entry name" value="L-THREONINE DEHYDRATASE CATABOLIC TDCB"/>
    <property type="match status" value="1"/>
</dbReference>
<dbReference type="PANTHER" id="PTHR48078">
    <property type="entry name" value="THREONINE DEHYDRATASE, MITOCHONDRIAL-RELATED"/>
    <property type="match status" value="1"/>
</dbReference>
<dbReference type="Pfam" id="PF00291">
    <property type="entry name" value="PALP"/>
    <property type="match status" value="1"/>
</dbReference>
<dbReference type="PIRSF" id="PIRSF038945">
    <property type="entry name" value="Thr_synthase"/>
    <property type="match status" value="1"/>
</dbReference>
<dbReference type="SUPFAM" id="SSF53686">
    <property type="entry name" value="Tryptophan synthase beta subunit-like PLP-dependent enzymes"/>
    <property type="match status" value="1"/>
</dbReference>
<dbReference type="PROSITE" id="PS00165">
    <property type="entry name" value="DEHYDRATASE_SER_THR"/>
    <property type="match status" value="1"/>
</dbReference>
<feature type="chain" id="PRO_0000185642" description="Threonine synthase">
    <location>
        <begin position="1"/>
        <end position="405"/>
    </location>
</feature>
<feature type="binding site" evidence="1">
    <location>
        <position position="132"/>
    </location>
    <ligand>
        <name>pyridoxal 5'-phosphate</name>
        <dbReference type="ChEBI" id="CHEBI:597326"/>
    </ligand>
</feature>
<feature type="binding site" evidence="1">
    <location>
        <begin position="233"/>
        <end position="237"/>
    </location>
    <ligand>
        <name>pyridoxal 5'-phosphate</name>
        <dbReference type="ChEBI" id="CHEBI:597326"/>
    </ligand>
</feature>
<feature type="binding site" evidence="1">
    <location>
        <position position="371"/>
    </location>
    <ligand>
        <name>pyridoxal 5'-phosphate</name>
        <dbReference type="ChEBI" id="CHEBI:597326"/>
    </ligand>
</feature>
<feature type="modified residue" description="N6-(pyridoxal phosphate)lysine" evidence="1">
    <location>
        <position position="106"/>
    </location>
</feature>
<reference key="1">
    <citation type="journal article" date="1996" name="Science">
        <title>Complete genome sequence of the methanogenic archaeon, Methanococcus jannaschii.</title>
        <authorList>
            <person name="Bult C.J."/>
            <person name="White O."/>
            <person name="Olsen G.J."/>
            <person name="Zhou L."/>
            <person name="Fleischmann R.D."/>
            <person name="Sutton G.G."/>
            <person name="Blake J.A."/>
            <person name="FitzGerald L.M."/>
            <person name="Clayton R.A."/>
            <person name="Gocayne J.D."/>
            <person name="Kerlavage A.R."/>
            <person name="Dougherty B.A."/>
            <person name="Tomb J.-F."/>
            <person name="Adams M.D."/>
            <person name="Reich C.I."/>
            <person name="Overbeek R."/>
            <person name="Kirkness E.F."/>
            <person name="Weinstock K.G."/>
            <person name="Merrick J.M."/>
            <person name="Glodek A."/>
            <person name="Scott J.L."/>
            <person name="Geoghagen N.S.M."/>
            <person name="Weidman J.F."/>
            <person name="Fuhrmann J.L."/>
            <person name="Nguyen D."/>
            <person name="Utterback T.R."/>
            <person name="Kelley J.M."/>
            <person name="Peterson J.D."/>
            <person name="Sadow P.W."/>
            <person name="Hanna M.C."/>
            <person name="Cotton M.D."/>
            <person name="Roberts K.M."/>
            <person name="Hurst M.A."/>
            <person name="Kaine B.P."/>
            <person name="Borodovsky M."/>
            <person name="Klenk H.-P."/>
            <person name="Fraser C.M."/>
            <person name="Smith H.O."/>
            <person name="Woese C.R."/>
            <person name="Venter J.C."/>
        </authorList>
    </citation>
    <scope>NUCLEOTIDE SEQUENCE [LARGE SCALE GENOMIC DNA]</scope>
    <source>
        <strain>ATCC 43067 / DSM 2661 / JAL-1 / JCM 10045 / NBRC 100440</strain>
    </source>
</reference>
<comment type="function">
    <text evidence="1">Catalyzes the gamma-elimination of phosphate from L-phosphohomoserine and the beta-addition of water to produce L-threonine.</text>
</comment>
<comment type="catalytic activity">
    <reaction>
        <text>O-phospho-L-homoserine + H2O = L-threonine + phosphate</text>
        <dbReference type="Rhea" id="RHEA:10840"/>
        <dbReference type="ChEBI" id="CHEBI:15377"/>
        <dbReference type="ChEBI" id="CHEBI:43474"/>
        <dbReference type="ChEBI" id="CHEBI:57590"/>
        <dbReference type="ChEBI" id="CHEBI:57926"/>
        <dbReference type="EC" id="4.2.3.1"/>
    </reaction>
</comment>
<comment type="cofactor">
    <cofactor evidence="1">
        <name>pyridoxal 5'-phosphate</name>
        <dbReference type="ChEBI" id="CHEBI:597326"/>
    </cofactor>
</comment>
<comment type="pathway">
    <text>Amino-acid biosynthesis; L-threonine biosynthesis; L-threonine from L-aspartate: step 5/5.</text>
</comment>
<comment type="similarity">
    <text evidence="2">Belongs to the threonine synthase family.</text>
</comment>
<sequence length="405" mass="44601">MLQRCIKCGKTYDVDEIIYTCECGGLLEIIYDYEEIKDKVSEEKLRKREIGVWRYLEYLPVKDESKIVSLCEGGTPLYRCNNLEKELGIKELYVKNEGANPTGSFKDRGMTVGVTRANELGVEVVGCASTGNTSASLAAYSARSGKKCIVLLPEGKVALGKLAQAMFYGAKVIQVKGNFDDALDMVKQLAKEKLIYLLNSINPFRLEGQKTIAFEICDQLNWQVPDRVIVPVGNAGNISAIWKGFKEFEITGIIDELPKMTGIQADGAKPIVEAFRKRAKDIIPYKNPETIATAIRIGNPVNAPKALDAIYSSGGYAEAVTDEEIVEAQKLLARKEGIFVEPASASSIAGLKKLLEEGIIDRDERIVCITTGHGLKDPDAAIRASEEPIKIECDMNVLKRILKEL</sequence>
<name>THRC_METJA</name>
<protein>
    <recommendedName>
        <fullName>Threonine synthase</fullName>
        <shortName>TS</shortName>
        <ecNumber>4.2.3.1</ecNumber>
    </recommendedName>
</protein>
<evidence type="ECO:0000250" key="1"/>
<evidence type="ECO:0000305" key="2"/>
<gene>
    <name type="primary">thrC</name>
    <name type="ordered locus">MJ1465</name>
</gene>
<proteinExistence type="inferred from homology"/>
<keyword id="KW-0028">Amino-acid biosynthesis</keyword>
<keyword id="KW-0456">Lyase</keyword>
<keyword id="KW-0663">Pyridoxal phosphate</keyword>
<keyword id="KW-1185">Reference proteome</keyword>
<keyword id="KW-0791">Threonine biosynthesis</keyword>
<accession>Q58860</accession>